<accession>P60705</accession>
<feature type="chain" id="PRO_0000171773" description="DNA dC-&gt;dU-editing enzyme APOBEC3">
    <location>
        <begin position="1"/>
        <end position="429"/>
    </location>
</feature>
<feature type="domain" description="CMP/dCMP-type deaminase 1" evidence="2">
    <location>
        <begin position="38"/>
        <end position="154"/>
    </location>
</feature>
<feature type="domain" description="CMP/dCMP-type deaminase 2" evidence="2">
    <location>
        <begin position="238"/>
        <end position="357"/>
    </location>
</feature>
<feature type="active site" description="Proton donor" evidence="1">
    <location>
        <position position="73"/>
    </location>
</feature>
<feature type="binding site" evidence="1">
    <location>
        <position position="71"/>
    </location>
    <ligand>
        <name>Zn(2+)</name>
        <dbReference type="ChEBI" id="CHEBI:29105"/>
    </ligand>
</feature>
<feature type="binding site" evidence="1">
    <location>
        <position position="105"/>
    </location>
    <ligand>
        <name>Zn(2+)</name>
        <dbReference type="ChEBI" id="CHEBI:29105"/>
    </ligand>
</feature>
<feature type="binding site" evidence="1">
    <location>
        <position position="108"/>
    </location>
    <ligand>
        <name>Zn(2+)</name>
        <dbReference type="ChEBI" id="CHEBI:29105"/>
    </ligand>
</feature>
<feature type="binding site" evidence="1">
    <location>
        <position position="288"/>
    </location>
    <ligand>
        <name>Zn(2+)</name>
        <dbReference type="ChEBI" id="CHEBI:29105"/>
    </ligand>
</feature>
<feature type="binding site" evidence="1">
    <location>
        <position position="316"/>
    </location>
    <ligand>
        <name>Zn(2+)</name>
        <dbReference type="ChEBI" id="CHEBI:29105"/>
    </ligand>
</feature>
<feature type="binding site" evidence="1">
    <location>
        <position position="319"/>
    </location>
    <ligand>
        <name>Zn(2+)</name>
        <dbReference type="ChEBI" id="CHEBI:29105"/>
    </ligand>
</feature>
<reference key="1">
    <citation type="submission" date="2004-02" db="UniProtKB">
        <authorList>
            <person name="Mariani R."/>
            <person name="Landau N.R."/>
        </authorList>
    </citation>
    <scope>NUCLEOTIDE SEQUENCE</scope>
</reference>
<reference key="2">
    <citation type="journal article" date="2003" name="Cell">
        <title>Species-specific exclusion of APOBEC3G from HIV-1 virions by Vif.</title>
        <authorList>
            <person name="Mariani R."/>
            <person name="Chen D."/>
            <person name="Schroefelbauer B."/>
            <person name="Navarro F."/>
            <person name="Koenig R."/>
            <person name="Bollman B."/>
            <person name="Muenk C."/>
            <person name="Nymark-McMahon H."/>
            <person name="Landau N.R."/>
        </authorList>
    </citation>
    <scope>FUNCTION</scope>
</reference>
<organism>
    <name type="scientific">Rattus norvegicus</name>
    <name type="common">Rat</name>
    <dbReference type="NCBI Taxonomy" id="10116"/>
    <lineage>
        <taxon>Eukaryota</taxon>
        <taxon>Metazoa</taxon>
        <taxon>Chordata</taxon>
        <taxon>Craniata</taxon>
        <taxon>Vertebrata</taxon>
        <taxon>Euteleostomi</taxon>
        <taxon>Mammalia</taxon>
        <taxon>Eutheria</taxon>
        <taxon>Euarchontoglires</taxon>
        <taxon>Glires</taxon>
        <taxon>Rodentia</taxon>
        <taxon>Myomorpha</taxon>
        <taxon>Muroidea</taxon>
        <taxon>Muridae</taxon>
        <taxon>Murinae</taxon>
        <taxon>Rattus</taxon>
    </lineage>
</organism>
<evidence type="ECO:0000250" key="1"/>
<evidence type="ECO:0000255" key="2">
    <source>
        <dbReference type="PROSITE-ProRule" id="PRU01083"/>
    </source>
</evidence>
<evidence type="ECO:0000269" key="3">
    <source>
    </source>
</evidence>
<evidence type="ECO:0000305" key="4"/>
<name>ABEC3_RAT</name>
<sequence>MGPFCLGCSHRKCYSPIRNLISQETFKFHFKNLRYAIDRKDTFLCYEVTRKDCDSPVSLHHGVFKNKDNIHAEICFLYWFHDKVLKVLSPREEFKITWYMSWSPCFECAEQVLRFLATHHNLSLDIFSSRLYNIRDPENQQNLCRLVQEGAQVAAMDLYEFKKCWKKFVDNGGRRFRPWKKLLTNFRYQDSKLQEILRPCYIPVPSSSSSTLSNICLTKGLPETRFCVERRRVHLLSEEEFYSQFYNQRVKHLCYYHGVKPYLCYQLEQFNGQAPLKGCLLSEKGKQHAEILFLDKIRSMELSQVIITCYLTWSPCPNCAWQLAAFKRDRPDLILHIYTSRLYFHWKRPFQKGLCSLWQSGILVDVMDLPQFTDCWTNFVNPKRPFWPWKGLEIISRRTQRRLHRIKESWGLQDLVNDFGNLQLGPPMS</sequence>
<protein>
    <recommendedName>
        <fullName>DNA dC-&gt;dU-editing enzyme APOBEC3</fullName>
        <ecNumber>3.5.4.38</ecNumber>
    </recommendedName>
</protein>
<gene>
    <name type="primary">Apobec3</name>
</gene>
<proteinExistence type="inferred from homology"/>
<comment type="function">
    <text evidence="3">DNA deaminase (cytidine deaminase) which acts as an inhibitor of retrovirus replication and retrotransposon mobility via deaminase-dependent and -independent mechanisms. Selectively targets single-stranded DNA and does not deaminate double-stranded DNA or single- or double-stranded RNA.</text>
</comment>
<comment type="catalytic activity">
    <reaction>
        <text>a 2'-deoxycytidine in single-stranded DNA + H2O + H(+) = a 2'-deoxyuridine in single-stranded DNA + NH4(+)</text>
        <dbReference type="Rhea" id="RHEA:50948"/>
        <dbReference type="Rhea" id="RHEA-COMP:12846"/>
        <dbReference type="Rhea" id="RHEA-COMP:12847"/>
        <dbReference type="ChEBI" id="CHEBI:15377"/>
        <dbReference type="ChEBI" id="CHEBI:15378"/>
        <dbReference type="ChEBI" id="CHEBI:28938"/>
        <dbReference type="ChEBI" id="CHEBI:85452"/>
        <dbReference type="ChEBI" id="CHEBI:133902"/>
        <dbReference type="EC" id="3.5.4.38"/>
    </reaction>
</comment>
<comment type="cofactor">
    <cofactor evidence="1">
        <name>Zn(2+)</name>
        <dbReference type="ChEBI" id="CHEBI:29105"/>
    </cofactor>
</comment>
<comment type="subunit">
    <text evidence="1">Homodimer.</text>
</comment>
<comment type="subcellular location">
    <subcellularLocation>
        <location evidence="1">Cytoplasm</location>
    </subcellularLocation>
</comment>
<comment type="domain">
    <text evidence="1">The CMP/dCMP deaminase domain 1 confers deoxycytidine deaminase activity, whereas the CMP/dCMP deaminase domain 2 mediates RNA-dependent oligomerization and virion incorporation.</text>
</comment>
<comment type="miscellaneous">
    <text>Probable human APOBEC3G ortholog.</text>
</comment>
<comment type="similarity">
    <text evidence="4">Belongs to the cytidine and deoxycytidylate deaminase family.</text>
</comment>
<dbReference type="EC" id="3.5.4.38"/>
<dbReference type="SMR" id="P60705"/>
<dbReference type="FunCoup" id="P60705">
    <property type="interactions" value="59"/>
</dbReference>
<dbReference type="iPTMnet" id="P60705"/>
<dbReference type="PhosphoSitePlus" id="P60705"/>
<dbReference type="UCSC" id="RGD:1307800">
    <property type="organism name" value="rat"/>
</dbReference>
<dbReference type="AGR" id="RGD:1307800"/>
<dbReference type="RGD" id="1307800">
    <property type="gene designation" value="Apobec3"/>
</dbReference>
<dbReference type="InParanoid" id="P60705"/>
<dbReference type="OrthoDB" id="9445293at2759"/>
<dbReference type="PhylomeDB" id="P60705"/>
<dbReference type="Reactome" id="R-RNO-72200">
    <property type="pathway name" value="mRNA Editing: C to U Conversion"/>
</dbReference>
<dbReference type="Reactome" id="R-RNO-75094">
    <property type="pathway name" value="Formation of the Editosome"/>
</dbReference>
<dbReference type="PRO" id="PR:P60705"/>
<dbReference type="Proteomes" id="UP000002494">
    <property type="component" value="Unplaced"/>
</dbReference>
<dbReference type="GO" id="GO:0005737">
    <property type="term" value="C:cytoplasm"/>
    <property type="evidence" value="ECO:0000250"/>
    <property type="project" value="UniProtKB"/>
</dbReference>
<dbReference type="GO" id="GO:0005634">
    <property type="term" value="C:nucleus"/>
    <property type="evidence" value="ECO:0000266"/>
    <property type="project" value="RGD"/>
</dbReference>
<dbReference type="GO" id="GO:0000932">
    <property type="term" value="C:P-body"/>
    <property type="evidence" value="ECO:0000266"/>
    <property type="project" value="RGD"/>
</dbReference>
<dbReference type="GO" id="GO:0004126">
    <property type="term" value="F:cytidine deaminase activity"/>
    <property type="evidence" value="ECO:0000266"/>
    <property type="project" value="RGD"/>
</dbReference>
<dbReference type="GO" id="GO:0003723">
    <property type="term" value="F:RNA binding"/>
    <property type="evidence" value="ECO:0000318"/>
    <property type="project" value="GO_Central"/>
</dbReference>
<dbReference type="GO" id="GO:0008270">
    <property type="term" value="F:zinc ion binding"/>
    <property type="evidence" value="ECO:0007669"/>
    <property type="project" value="InterPro"/>
</dbReference>
<dbReference type="GO" id="GO:0044355">
    <property type="term" value="P:clearance of foreign intracellular DNA"/>
    <property type="evidence" value="ECO:0000266"/>
    <property type="project" value="RGD"/>
</dbReference>
<dbReference type="GO" id="GO:0016554">
    <property type="term" value="P:cytidine to uridine editing"/>
    <property type="evidence" value="ECO:0000318"/>
    <property type="project" value="GO_Central"/>
</dbReference>
<dbReference type="GO" id="GO:0051607">
    <property type="term" value="P:defense response to virus"/>
    <property type="evidence" value="ECO:0000266"/>
    <property type="project" value="RGD"/>
</dbReference>
<dbReference type="GO" id="GO:0070383">
    <property type="term" value="P:DNA cytosine deamination"/>
    <property type="evidence" value="ECO:0000266"/>
    <property type="project" value="RGD"/>
</dbReference>
<dbReference type="GO" id="GO:0002244">
    <property type="term" value="P:hematopoietic progenitor cell differentiation"/>
    <property type="evidence" value="ECO:0000266"/>
    <property type="project" value="RGD"/>
</dbReference>
<dbReference type="GO" id="GO:0045087">
    <property type="term" value="P:innate immune response"/>
    <property type="evidence" value="ECO:0007669"/>
    <property type="project" value="UniProtKB-KW"/>
</dbReference>
<dbReference type="GO" id="GO:0044828">
    <property type="term" value="P:negative regulation by host of viral genome replication"/>
    <property type="evidence" value="ECO:0000266"/>
    <property type="project" value="RGD"/>
</dbReference>
<dbReference type="GO" id="GO:0045869">
    <property type="term" value="P:negative regulation of single stranded viral RNA replication via double stranded DNA intermediate"/>
    <property type="evidence" value="ECO:0000266"/>
    <property type="project" value="RGD"/>
</dbReference>
<dbReference type="GO" id="GO:0045071">
    <property type="term" value="P:negative regulation of viral genome replication"/>
    <property type="evidence" value="ECO:0000266"/>
    <property type="project" value="RGD"/>
</dbReference>
<dbReference type="GO" id="GO:0050688">
    <property type="term" value="P:regulation of defense response to virus"/>
    <property type="evidence" value="ECO:0000266"/>
    <property type="project" value="RGD"/>
</dbReference>
<dbReference type="GO" id="GO:1903900">
    <property type="term" value="P:regulation of viral life cycle"/>
    <property type="evidence" value="ECO:0000266"/>
    <property type="project" value="RGD"/>
</dbReference>
<dbReference type="GO" id="GO:0010526">
    <property type="term" value="P:transposable element silencing"/>
    <property type="evidence" value="ECO:0000250"/>
    <property type="project" value="UniProtKB"/>
</dbReference>
<dbReference type="CDD" id="cd01283">
    <property type="entry name" value="cytidine_deaminase"/>
    <property type="match status" value="2"/>
</dbReference>
<dbReference type="FunFam" id="3.40.140.10:FF:000029">
    <property type="entry name" value="DNA dC-&gt;dU-editing enzyme APOBEC-3G"/>
    <property type="match status" value="1"/>
</dbReference>
<dbReference type="Gene3D" id="3.40.140.10">
    <property type="entry name" value="Cytidine Deaminase, domain 2"/>
    <property type="match status" value="2"/>
</dbReference>
<dbReference type="InterPro" id="IPR016192">
    <property type="entry name" value="APOBEC/CMP_deaminase_Zn-bd"/>
</dbReference>
<dbReference type="InterPro" id="IPR050610">
    <property type="entry name" value="APOBEC_Cyt_Deaminase"/>
</dbReference>
<dbReference type="InterPro" id="IPR002125">
    <property type="entry name" value="CMP_dCMP_dom"/>
</dbReference>
<dbReference type="InterPro" id="IPR016193">
    <property type="entry name" value="Cytidine_deaminase-like"/>
</dbReference>
<dbReference type="PANTHER" id="PTHR13857:SF43">
    <property type="entry name" value="DNA DC-DU-EDITING ENZYME APOBEC-3H"/>
    <property type="match status" value="1"/>
</dbReference>
<dbReference type="PANTHER" id="PTHR13857">
    <property type="entry name" value="MRNA EDITING ENZYME"/>
    <property type="match status" value="1"/>
</dbReference>
<dbReference type="Pfam" id="PF18772">
    <property type="entry name" value="APOBEC2"/>
    <property type="match status" value="1"/>
</dbReference>
<dbReference type="Pfam" id="PF18782">
    <property type="entry name" value="NAD2"/>
    <property type="match status" value="1"/>
</dbReference>
<dbReference type="SUPFAM" id="SSF53927">
    <property type="entry name" value="Cytidine deaminase-like"/>
    <property type="match status" value="2"/>
</dbReference>
<dbReference type="PROSITE" id="PS00903">
    <property type="entry name" value="CYT_DCMP_DEAMINASES_1"/>
    <property type="match status" value="2"/>
</dbReference>
<dbReference type="PROSITE" id="PS51747">
    <property type="entry name" value="CYT_DCMP_DEAMINASES_2"/>
    <property type="match status" value="2"/>
</dbReference>
<keyword id="KW-0051">Antiviral defense</keyword>
<keyword id="KW-0963">Cytoplasm</keyword>
<keyword id="KW-0378">Hydrolase</keyword>
<keyword id="KW-0391">Immunity</keyword>
<keyword id="KW-0399">Innate immunity</keyword>
<keyword id="KW-0479">Metal-binding</keyword>
<keyword id="KW-1185">Reference proteome</keyword>
<keyword id="KW-0677">Repeat</keyword>
<keyword id="KW-0862">Zinc</keyword>